<dbReference type="EC" id="1.97.1.12" evidence="2"/>
<dbReference type="EMBL" id="DQ383815">
    <property type="protein sequence ID" value="ABD47200.1"/>
    <property type="molecule type" value="Genomic_DNA"/>
</dbReference>
<dbReference type="RefSeq" id="YP_588172.1">
    <property type="nucleotide sequence ID" value="NC_007977.1"/>
</dbReference>
<dbReference type="SMR" id="Q1KXQ4"/>
<dbReference type="GeneID" id="4055626"/>
<dbReference type="KEGG" id="han:4055626"/>
<dbReference type="OMA" id="GHMSHAV"/>
<dbReference type="OrthoDB" id="9at2759"/>
<dbReference type="GO" id="GO:0009535">
    <property type="term" value="C:chloroplast thylakoid membrane"/>
    <property type="evidence" value="ECO:0007669"/>
    <property type="project" value="UniProtKB-SubCell"/>
</dbReference>
<dbReference type="GO" id="GO:0009522">
    <property type="term" value="C:photosystem I"/>
    <property type="evidence" value="ECO:0007669"/>
    <property type="project" value="UniProtKB-KW"/>
</dbReference>
<dbReference type="GO" id="GO:0051539">
    <property type="term" value="F:4 iron, 4 sulfur cluster binding"/>
    <property type="evidence" value="ECO:0007669"/>
    <property type="project" value="UniProtKB-KW"/>
</dbReference>
<dbReference type="GO" id="GO:0009055">
    <property type="term" value="F:electron transfer activity"/>
    <property type="evidence" value="ECO:0007669"/>
    <property type="project" value="UniProtKB-UniRule"/>
</dbReference>
<dbReference type="GO" id="GO:0046872">
    <property type="term" value="F:metal ion binding"/>
    <property type="evidence" value="ECO:0007669"/>
    <property type="project" value="UniProtKB-KW"/>
</dbReference>
<dbReference type="GO" id="GO:0016491">
    <property type="term" value="F:oxidoreductase activity"/>
    <property type="evidence" value="ECO:0007669"/>
    <property type="project" value="UniProtKB-KW"/>
</dbReference>
<dbReference type="GO" id="GO:0009773">
    <property type="term" value="P:photosynthetic electron transport in photosystem I"/>
    <property type="evidence" value="ECO:0007669"/>
    <property type="project" value="InterPro"/>
</dbReference>
<dbReference type="FunFam" id="3.30.70.20:FF:000001">
    <property type="entry name" value="Photosystem I iron-sulfur center"/>
    <property type="match status" value="1"/>
</dbReference>
<dbReference type="Gene3D" id="3.30.70.20">
    <property type="match status" value="1"/>
</dbReference>
<dbReference type="HAMAP" id="MF_01303">
    <property type="entry name" value="PSI_PsaC"/>
    <property type="match status" value="1"/>
</dbReference>
<dbReference type="InterPro" id="IPR017896">
    <property type="entry name" value="4Fe4S_Fe-S-bd"/>
</dbReference>
<dbReference type="InterPro" id="IPR017900">
    <property type="entry name" value="4Fe4S_Fe_S_CS"/>
</dbReference>
<dbReference type="InterPro" id="IPR050157">
    <property type="entry name" value="PSI_iron-sulfur_center"/>
</dbReference>
<dbReference type="InterPro" id="IPR017491">
    <property type="entry name" value="PSI_PsaC"/>
</dbReference>
<dbReference type="NCBIfam" id="TIGR03048">
    <property type="entry name" value="PS_I_psaC"/>
    <property type="match status" value="1"/>
</dbReference>
<dbReference type="PANTHER" id="PTHR24960:SF79">
    <property type="entry name" value="PHOTOSYSTEM I IRON-SULFUR CENTER"/>
    <property type="match status" value="1"/>
</dbReference>
<dbReference type="PANTHER" id="PTHR24960">
    <property type="entry name" value="PHOTOSYSTEM I IRON-SULFUR CENTER-RELATED"/>
    <property type="match status" value="1"/>
</dbReference>
<dbReference type="Pfam" id="PF14697">
    <property type="entry name" value="Fer4_21"/>
    <property type="match status" value="1"/>
</dbReference>
<dbReference type="SUPFAM" id="SSF54862">
    <property type="entry name" value="4Fe-4S ferredoxins"/>
    <property type="match status" value="1"/>
</dbReference>
<dbReference type="PROSITE" id="PS00198">
    <property type="entry name" value="4FE4S_FER_1"/>
    <property type="match status" value="2"/>
</dbReference>
<dbReference type="PROSITE" id="PS51379">
    <property type="entry name" value="4FE4S_FER_2"/>
    <property type="match status" value="2"/>
</dbReference>
<proteinExistence type="inferred from homology"/>
<keyword id="KW-0004">4Fe-4S</keyword>
<keyword id="KW-0150">Chloroplast</keyword>
<keyword id="KW-0249">Electron transport</keyword>
<keyword id="KW-0408">Iron</keyword>
<keyword id="KW-0411">Iron-sulfur</keyword>
<keyword id="KW-0472">Membrane</keyword>
<keyword id="KW-0479">Metal-binding</keyword>
<keyword id="KW-0560">Oxidoreductase</keyword>
<keyword id="KW-0602">Photosynthesis</keyword>
<keyword id="KW-0603">Photosystem I</keyword>
<keyword id="KW-0934">Plastid</keyword>
<keyword id="KW-0677">Repeat</keyword>
<keyword id="KW-0793">Thylakoid</keyword>
<keyword id="KW-0813">Transport</keyword>
<feature type="initiator methionine" description="Removed" evidence="1">
    <location>
        <position position="1"/>
    </location>
</feature>
<feature type="chain" id="PRO_0000275984" description="Photosystem I iron-sulfur center">
    <location>
        <begin position="2"/>
        <end position="81"/>
    </location>
</feature>
<feature type="domain" description="4Fe-4S ferredoxin-type 1" evidence="2">
    <location>
        <begin position="2"/>
        <end position="31"/>
    </location>
</feature>
<feature type="domain" description="4Fe-4S ferredoxin-type 2" evidence="2">
    <location>
        <begin position="39"/>
        <end position="68"/>
    </location>
</feature>
<feature type="binding site" evidence="2">
    <location>
        <position position="11"/>
    </location>
    <ligand>
        <name>[4Fe-4S] cluster</name>
        <dbReference type="ChEBI" id="CHEBI:49883"/>
        <label>1</label>
    </ligand>
</feature>
<feature type="binding site" evidence="2">
    <location>
        <position position="14"/>
    </location>
    <ligand>
        <name>[4Fe-4S] cluster</name>
        <dbReference type="ChEBI" id="CHEBI:49883"/>
        <label>1</label>
    </ligand>
</feature>
<feature type="binding site" evidence="2">
    <location>
        <position position="17"/>
    </location>
    <ligand>
        <name>[4Fe-4S] cluster</name>
        <dbReference type="ChEBI" id="CHEBI:49883"/>
        <label>1</label>
    </ligand>
</feature>
<feature type="binding site" evidence="2">
    <location>
        <position position="21"/>
    </location>
    <ligand>
        <name>[4Fe-4S] cluster</name>
        <dbReference type="ChEBI" id="CHEBI:49883"/>
        <label>2</label>
    </ligand>
</feature>
<feature type="binding site" evidence="2">
    <location>
        <position position="48"/>
    </location>
    <ligand>
        <name>[4Fe-4S] cluster</name>
        <dbReference type="ChEBI" id="CHEBI:49883"/>
        <label>2</label>
    </ligand>
</feature>
<feature type="binding site" evidence="2">
    <location>
        <position position="51"/>
    </location>
    <ligand>
        <name>[4Fe-4S] cluster</name>
        <dbReference type="ChEBI" id="CHEBI:49883"/>
        <label>2</label>
    </ligand>
</feature>
<feature type="binding site" evidence="2">
    <location>
        <position position="54"/>
    </location>
    <ligand>
        <name>[4Fe-4S] cluster</name>
        <dbReference type="ChEBI" id="CHEBI:49883"/>
        <label>2</label>
    </ligand>
</feature>
<feature type="binding site" evidence="2">
    <location>
        <position position="58"/>
    </location>
    <ligand>
        <name>[4Fe-4S] cluster</name>
        <dbReference type="ChEBI" id="CHEBI:49883"/>
        <label>1</label>
    </ligand>
</feature>
<protein>
    <recommendedName>
        <fullName evidence="2">Photosystem I iron-sulfur center</fullName>
        <ecNumber evidence="2">1.97.1.12</ecNumber>
    </recommendedName>
    <alternativeName>
        <fullName evidence="2">9 kDa polypeptide</fullName>
    </alternativeName>
    <alternativeName>
        <fullName evidence="2">PSI-C</fullName>
    </alternativeName>
    <alternativeName>
        <fullName evidence="2">Photosystem I subunit VII</fullName>
    </alternativeName>
    <alternativeName>
        <fullName evidence="2">PsaC</fullName>
    </alternativeName>
</protein>
<name>PSAC_HELAN</name>
<geneLocation type="chloroplast"/>
<evidence type="ECO:0000250" key="1"/>
<evidence type="ECO:0000255" key="2">
    <source>
        <dbReference type="HAMAP-Rule" id="MF_01303"/>
    </source>
</evidence>
<sequence>MSHSVKIYDTCIGCTQCVRACPTDVLEMIPWDGCKAKQIASAPRTEDCVGCKRCESACPTDFLSVRVYLWHETTRSMGIAY</sequence>
<reference key="1">
    <citation type="submission" date="2006-01" db="EMBL/GenBank/DDBJ databases">
        <title>A comparison of the first two published chloroplast genomes in Asteraceae: Lactuca and Helianthus.</title>
        <authorList>
            <person name="Timme R.E."/>
            <person name="Kuehl J.V."/>
            <person name="Boore J.L."/>
            <person name="Jansen R.K."/>
        </authorList>
    </citation>
    <scope>NUCLEOTIDE SEQUENCE [LARGE SCALE GENOMIC DNA]</scope>
    <source>
        <strain>cv. HA383</strain>
    </source>
</reference>
<gene>
    <name evidence="2" type="primary">psaC</name>
</gene>
<organism>
    <name type="scientific">Helianthus annuus</name>
    <name type="common">Common sunflower</name>
    <dbReference type="NCBI Taxonomy" id="4232"/>
    <lineage>
        <taxon>Eukaryota</taxon>
        <taxon>Viridiplantae</taxon>
        <taxon>Streptophyta</taxon>
        <taxon>Embryophyta</taxon>
        <taxon>Tracheophyta</taxon>
        <taxon>Spermatophyta</taxon>
        <taxon>Magnoliopsida</taxon>
        <taxon>eudicotyledons</taxon>
        <taxon>Gunneridae</taxon>
        <taxon>Pentapetalae</taxon>
        <taxon>asterids</taxon>
        <taxon>campanulids</taxon>
        <taxon>Asterales</taxon>
        <taxon>Asteraceae</taxon>
        <taxon>Asteroideae</taxon>
        <taxon>Heliantheae alliance</taxon>
        <taxon>Heliantheae</taxon>
        <taxon>Helianthus</taxon>
    </lineage>
</organism>
<comment type="function">
    <text evidence="2">Apoprotein for the two 4Fe-4S centers FA and FB of photosystem I (PSI); essential for photochemical activity. FB is the terminal electron acceptor of PSI, donating electrons to ferredoxin. The C-terminus interacts with PsaA/B/D and helps assemble the protein into the PSI complex. Required for binding of PsaD and PsaE to PSI. PSI is a plastocyanin-ferredoxin oxidoreductase, converting photonic excitation into a charge separation, which transfers an electron from the donor P700 chlorophyll pair to the spectroscopically characterized acceptors A0, A1, FX, FA and FB in turn.</text>
</comment>
<comment type="catalytic activity">
    <reaction evidence="2">
        <text>reduced [plastocyanin] + hnu + oxidized [2Fe-2S]-[ferredoxin] = oxidized [plastocyanin] + reduced [2Fe-2S]-[ferredoxin]</text>
        <dbReference type="Rhea" id="RHEA:30407"/>
        <dbReference type="Rhea" id="RHEA-COMP:10000"/>
        <dbReference type="Rhea" id="RHEA-COMP:10001"/>
        <dbReference type="Rhea" id="RHEA-COMP:10039"/>
        <dbReference type="Rhea" id="RHEA-COMP:10040"/>
        <dbReference type="ChEBI" id="CHEBI:29036"/>
        <dbReference type="ChEBI" id="CHEBI:30212"/>
        <dbReference type="ChEBI" id="CHEBI:33737"/>
        <dbReference type="ChEBI" id="CHEBI:33738"/>
        <dbReference type="ChEBI" id="CHEBI:49552"/>
        <dbReference type="EC" id="1.97.1.12"/>
    </reaction>
</comment>
<comment type="cofactor">
    <cofactor evidence="2">
        <name>[4Fe-4S] cluster</name>
        <dbReference type="ChEBI" id="CHEBI:49883"/>
    </cofactor>
    <text evidence="2">Binds 2 [4Fe-4S] clusters. Cluster 2 is most probably the spectroscopically characterized electron acceptor FA and cluster 1 is most probably FB.</text>
</comment>
<comment type="subunit">
    <text evidence="2">The eukaryotic PSI reaction center is composed of at least 11 subunits.</text>
</comment>
<comment type="subcellular location">
    <subcellularLocation>
        <location evidence="2">Plastid</location>
        <location evidence="2">Chloroplast thylakoid membrane</location>
        <topology evidence="2">Peripheral membrane protein</topology>
        <orientation evidence="2">Stromal side</orientation>
    </subcellularLocation>
</comment>
<accession>Q1KXQ4</accession>